<reference key="1">
    <citation type="journal article" date="2000" name="Mech. Dev.">
        <title>Dynamic expression of d-CdGAPr, a novel Drosophila melanogaster gene encoding a GTPase activating protein.</title>
        <authorList>
            <person name="Sagnier T."/>
            <person name="Grienenberger A."/>
            <person name="Mariol M.-C."/>
            <person name="Berenger H."/>
            <person name="Pradel J."/>
            <person name="Graba Y."/>
        </authorList>
    </citation>
    <scope>NUCLEOTIDE SEQUENCE [MRNA]</scope>
    <scope>TISSUE SPECIFICITY</scope>
    <scope>DEVELOPMENTAL STAGE</scope>
</reference>
<reference key="2">
    <citation type="journal article" date="2000" name="Science">
        <title>The genome sequence of Drosophila melanogaster.</title>
        <authorList>
            <person name="Adams M.D."/>
            <person name="Celniker S.E."/>
            <person name="Holt R.A."/>
            <person name="Evans C.A."/>
            <person name="Gocayne J.D."/>
            <person name="Amanatides P.G."/>
            <person name="Scherer S.E."/>
            <person name="Li P.W."/>
            <person name="Hoskins R.A."/>
            <person name="Galle R.F."/>
            <person name="George R.A."/>
            <person name="Lewis S.E."/>
            <person name="Richards S."/>
            <person name="Ashburner M."/>
            <person name="Henderson S.N."/>
            <person name="Sutton G.G."/>
            <person name="Wortman J.R."/>
            <person name="Yandell M.D."/>
            <person name="Zhang Q."/>
            <person name="Chen L.X."/>
            <person name="Brandon R.C."/>
            <person name="Rogers Y.-H.C."/>
            <person name="Blazej R.G."/>
            <person name="Champe M."/>
            <person name="Pfeiffer B.D."/>
            <person name="Wan K.H."/>
            <person name="Doyle C."/>
            <person name="Baxter E.G."/>
            <person name="Helt G."/>
            <person name="Nelson C.R."/>
            <person name="Miklos G.L.G."/>
            <person name="Abril J.F."/>
            <person name="Agbayani A."/>
            <person name="An H.-J."/>
            <person name="Andrews-Pfannkoch C."/>
            <person name="Baldwin D."/>
            <person name="Ballew R.M."/>
            <person name="Basu A."/>
            <person name="Baxendale J."/>
            <person name="Bayraktaroglu L."/>
            <person name="Beasley E.M."/>
            <person name="Beeson K.Y."/>
            <person name="Benos P.V."/>
            <person name="Berman B.P."/>
            <person name="Bhandari D."/>
            <person name="Bolshakov S."/>
            <person name="Borkova D."/>
            <person name="Botchan M.R."/>
            <person name="Bouck J."/>
            <person name="Brokstein P."/>
            <person name="Brottier P."/>
            <person name="Burtis K.C."/>
            <person name="Busam D.A."/>
            <person name="Butler H."/>
            <person name="Cadieu E."/>
            <person name="Center A."/>
            <person name="Chandra I."/>
            <person name="Cherry J.M."/>
            <person name="Cawley S."/>
            <person name="Dahlke C."/>
            <person name="Davenport L.B."/>
            <person name="Davies P."/>
            <person name="de Pablos B."/>
            <person name="Delcher A."/>
            <person name="Deng Z."/>
            <person name="Mays A.D."/>
            <person name="Dew I."/>
            <person name="Dietz S.M."/>
            <person name="Dodson K."/>
            <person name="Doup L.E."/>
            <person name="Downes M."/>
            <person name="Dugan-Rocha S."/>
            <person name="Dunkov B.C."/>
            <person name="Dunn P."/>
            <person name="Durbin K.J."/>
            <person name="Evangelista C.C."/>
            <person name="Ferraz C."/>
            <person name="Ferriera S."/>
            <person name="Fleischmann W."/>
            <person name="Fosler C."/>
            <person name="Gabrielian A.E."/>
            <person name="Garg N.S."/>
            <person name="Gelbart W.M."/>
            <person name="Glasser K."/>
            <person name="Glodek A."/>
            <person name="Gong F."/>
            <person name="Gorrell J.H."/>
            <person name="Gu Z."/>
            <person name="Guan P."/>
            <person name="Harris M."/>
            <person name="Harris N.L."/>
            <person name="Harvey D.A."/>
            <person name="Heiman T.J."/>
            <person name="Hernandez J.R."/>
            <person name="Houck J."/>
            <person name="Hostin D."/>
            <person name="Houston K.A."/>
            <person name="Howland T.J."/>
            <person name="Wei M.-H."/>
            <person name="Ibegwam C."/>
            <person name="Jalali M."/>
            <person name="Kalush F."/>
            <person name="Karpen G.H."/>
            <person name="Ke Z."/>
            <person name="Kennison J.A."/>
            <person name="Ketchum K.A."/>
            <person name="Kimmel B.E."/>
            <person name="Kodira C.D."/>
            <person name="Kraft C.L."/>
            <person name="Kravitz S."/>
            <person name="Kulp D."/>
            <person name="Lai Z."/>
            <person name="Lasko P."/>
            <person name="Lei Y."/>
            <person name="Levitsky A.A."/>
            <person name="Li J.H."/>
            <person name="Li Z."/>
            <person name="Liang Y."/>
            <person name="Lin X."/>
            <person name="Liu X."/>
            <person name="Mattei B."/>
            <person name="McIntosh T.C."/>
            <person name="McLeod M.P."/>
            <person name="McPherson D."/>
            <person name="Merkulov G."/>
            <person name="Milshina N.V."/>
            <person name="Mobarry C."/>
            <person name="Morris J."/>
            <person name="Moshrefi A."/>
            <person name="Mount S.M."/>
            <person name="Moy M."/>
            <person name="Murphy B."/>
            <person name="Murphy L."/>
            <person name="Muzny D.M."/>
            <person name="Nelson D.L."/>
            <person name="Nelson D.R."/>
            <person name="Nelson K.A."/>
            <person name="Nixon K."/>
            <person name="Nusskern D.R."/>
            <person name="Pacleb J.M."/>
            <person name="Palazzolo M."/>
            <person name="Pittman G.S."/>
            <person name="Pan S."/>
            <person name="Pollard J."/>
            <person name="Puri V."/>
            <person name="Reese M.G."/>
            <person name="Reinert K."/>
            <person name="Remington K."/>
            <person name="Saunders R.D.C."/>
            <person name="Scheeler F."/>
            <person name="Shen H."/>
            <person name="Shue B.C."/>
            <person name="Siden-Kiamos I."/>
            <person name="Simpson M."/>
            <person name="Skupski M.P."/>
            <person name="Smith T.J."/>
            <person name="Spier E."/>
            <person name="Spradling A.C."/>
            <person name="Stapleton M."/>
            <person name="Strong R."/>
            <person name="Sun E."/>
            <person name="Svirskas R."/>
            <person name="Tector C."/>
            <person name="Turner R."/>
            <person name="Venter E."/>
            <person name="Wang A.H."/>
            <person name="Wang X."/>
            <person name="Wang Z.-Y."/>
            <person name="Wassarman D.A."/>
            <person name="Weinstock G.M."/>
            <person name="Weissenbach J."/>
            <person name="Williams S.M."/>
            <person name="Woodage T."/>
            <person name="Worley K.C."/>
            <person name="Wu D."/>
            <person name="Yang S."/>
            <person name="Yao Q.A."/>
            <person name="Ye J."/>
            <person name="Yeh R.-F."/>
            <person name="Zaveri J.S."/>
            <person name="Zhan M."/>
            <person name="Zhang G."/>
            <person name="Zhao Q."/>
            <person name="Zheng L."/>
            <person name="Zheng X.H."/>
            <person name="Zhong F.N."/>
            <person name="Zhong W."/>
            <person name="Zhou X."/>
            <person name="Zhu S.C."/>
            <person name="Zhu X."/>
            <person name="Smith H.O."/>
            <person name="Gibbs R.A."/>
            <person name="Myers E.W."/>
            <person name="Rubin G.M."/>
            <person name="Venter J.C."/>
        </authorList>
    </citation>
    <scope>NUCLEOTIDE SEQUENCE [LARGE SCALE GENOMIC DNA]</scope>
    <source>
        <strain>Berkeley</strain>
    </source>
</reference>
<reference key="3">
    <citation type="journal article" date="2002" name="Genome Biol.">
        <title>Annotation of the Drosophila melanogaster euchromatic genome: a systematic review.</title>
        <authorList>
            <person name="Misra S."/>
            <person name="Crosby M.A."/>
            <person name="Mungall C.J."/>
            <person name="Matthews B.B."/>
            <person name="Campbell K.S."/>
            <person name="Hradecky P."/>
            <person name="Huang Y."/>
            <person name="Kaminker J.S."/>
            <person name="Millburn G.H."/>
            <person name="Prochnik S.E."/>
            <person name="Smith C.D."/>
            <person name="Tupy J.L."/>
            <person name="Whitfield E.J."/>
            <person name="Bayraktaroglu L."/>
            <person name="Berman B.P."/>
            <person name="Bettencourt B.R."/>
            <person name="Celniker S.E."/>
            <person name="de Grey A.D.N.J."/>
            <person name="Drysdale R.A."/>
            <person name="Harris N.L."/>
            <person name="Richter J."/>
            <person name="Russo S."/>
            <person name="Schroeder A.J."/>
            <person name="Shu S.Q."/>
            <person name="Stapleton M."/>
            <person name="Yamada C."/>
            <person name="Ashburner M."/>
            <person name="Gelbart W.M."/>
            <person name="Rubin G.M."/>
            <person name="Lewis S.E."/>
        </authorList>
    </citation>
    <scope>GENOME REANNOTATION</scope>
    <source>
        <strain>Berkeley</strain>
    </source>
</reference>
<reference key="4">
    <citation type="submission" date="2004-08" db="EMBL/GenBank/DDBJ databases">
        <authorList>
            <person name="Stapleton M."/>
            <person name="Carlson J.W."/>
            <person name="Chavez C."/>
            <person name="Frise E."/>
            <person name="George R.A."/>
            <person name="Pacleb J.M."/>
            <person name="Park S."/>
            <person name="Wan K.H."/>
            <person name="Yu C."/>
            <person name="Rubin G.M."/>
            <person name="Celniker S.E."/>
        </authorList>
    </citation>
    <scope>NUCLEOTIDE SEQUENCE [LARGE SCALE MRNA]</scope>
    <source>
        <strain>Berkeley</strain>
        <tissue>Embryo</tissue>
    </source>
</reference>
<reference key="5">
    <citation type="journal article" date="2002" name="Genome Biol.">
        <title>A Drosophila full-length cDNA resource.</title>
        <authorList>
            <person name="Stapleton M."/>
            <person name="Carlson J.W."/>
            <person name="Brokstein P."/>
            <person name="Yu C."/>
            <person name="Champe M."/>
            <person name="George R.A."/>
            <person name="Guarin H."/>
            <person name="Kronmiller B."/>
            <person name="Pacleb J.M."/>
            <person name="Park S."/>
            <person name="Wan K.H."/>
            <person name="Rubin G.M."/>
            <person name="Celniker S.E."/>
        </authorList>
    </citation>
    <scope>NUCLEOTIDE SEQUENCE [LARGE SCALE MRNA] OF 1062-1843</scope>
    <source>
        <strain>Berkeley</strain>
        <tissue>Embryo</tissue>
    </source>
</reference>
<reference key="6">
    <citation type="journal article" date="2007" name="Development">
        <title>Focal adhesion kinase controls morphogenesis of the Drosophila optic stalk.</title>
        <authorList>
            <person name="Murakami S."/>
            <person name="Umetsu D."/>
            <person name="Maeyama Y."/>
            <person name="Sato M."/>
            <person name="Yoshida S."/>
            <person name="Tabata T."/>
        </authorList>
    </citation>
    <scope>FUNCTION</scope>
</reference>
<reference key="7">
    <citation type="journal article" date="2007" name="Mol. Biosyst.">
        <title>An integrated chemical, mass spectrometric and computational strategy for (quantitative) phosphoproteomics: application to Drosophila melanogaster Kc167 cells.</title>
        <authorList>
            <person name="Bodenmiller B."/>
            <person name="Mueller L.N."/>
            <person name="Pedrioli P.G.A."/>
            <person name="Pflieger D."/>
            <person name="Juenger M.A."/>
            <person name="Eng J.K."/>
            <person name="Aebersold R."/>
            <person name="Tao W.A."/>
        </authorList>
    </citation>
    <scope>PHOSPHORYLATION [LARGE SCALE ANALYSIS] AT SER-1216</scope>
    <scope>IDENTIFICATION BY MASS SPECTROMETRY</scope>
</reference>
<reference key="8">
    <citation type="journal article" date="2008" name="J. Proteome Res.">
        <title>Phosphoproteome analysis of Drosophila melanogaster embryos.</title>
        <authorList>
            <person name="Zhai B."/>
            <person name="Villen J."/>
            <person name="Beausoleil S.A."/>
            <person name="Mintseris J."/>
            <person name="Gygi S.P."/>
        </authorList>
    </citation>
    <scope>PHOSPHORYLATION [LARGE SCALE ANALYSIS] AT SER-166; SER-168; SER-180; SER-837; SER-840; THR-843; SER-851; SER-861; SER-872; SER-876; SER-1029; THR-1118; THR-1121; SER-1125; SER-1281; SER-1284; SER-1453; SER-1456 AND THR-1679</scope>
    <scope>IDENTIFICATION BY MASS SPECTROMETRY</scope>
    <source>
        <tissue>Embryo</tissue>
    </source>
</reference>
<accession>Q9VIS1</accession>
<accession>Q6AWI4</accession>
<accession>Q8MSV9</accession>
<accession>Q9NCL1</accession>
<organism>
    <name type="scientific">Drosophila melanogaster</name>
    <name type="common">Fruit fly</name>
    <dbReference type="NCBI Taxonomy" id="7227"/>
    <lineage>
        <taxon>Eukaryota</taxon>
        <taxon>Metazoa</taxon>
        <taxon>Ecdysozoa</taxon>
        <taxon>Arthropoda</taxon>
        <taxon>Hexapoda</taxon>
        <taxon>Insecta</taxon>
        <taxon>Pterygota</taxon>
        <taxon>Neoptera</taxon>
        <taxon>Endopterygota</taxon>
        <taxon>Diptera</taxon>
        <taxon>Brachycera</taxon>
        <taxon>Muscomorpha</taxon>
        <taxon>Ephydroidea</taxon>
        <taxon>Drosophilidae</taxon>
        <taxon>Drosophila</taxon>
        <taxon>Sophophora</taxon>
    </lineage>
</organism>
<dbReference type="EMBL" id="AF218776">
    <property type="protein sequence ID" value="AAF44627.1"/>
    <property type="molecule type" value="mRNA"/>
</dbReference>
<dbReference type="EMBL" id="AE014134">
    <property type="protein sequence ID" value="AAF53844.2"/>
    <property type="molecule type" value="Genomic_DNA"/>
</dbReference>
<dbReference type="EMBL" id="BT015264">
    <property type="protein sequence ID" value="AAT94493.1"/>
    <property type="status" value="ALT_FRAME"/>
    <property type="molecule type" value="mRNA"/>
</dbReference>
<dbReference type="EMBL" id="AY118541">
    <property type="protein sequence ID" value="AAM49910.1"/>
    <property type="status" value="ALT_INIT"/>
    <property type="molecule type" value="mRNA"/>
</dbReference>
<dbReference type="RefSeq" id="NP_001260600.1">
    <property type="nucleotide sequence ID" value="NM_001273671.2"/>
</dbReference>
<dbReference type="RefSeq" id="NP_610002.1">
    <property type="nucleotide sequence ID" value="NM_136158.5"/>
</dbReference>
<dbReference type="SMR" id="Q9VIS1"/>
<dbReference type="BioGRID" id="61243">
    <property type="interactions" value="3"/>
</dbReference>
<dbReference type="FunCoup" id="Q9VIS1">
    <property type="interactions" value="8"/>
</dbReference>
<dbReference type="IntAct" id="Q9VIS1">
    <property type="interactions" value="3"/>
</dbReference>
<dbReference type="STRING" id="7227.FBpp0304488"/>
<dbReference type="GlyGen" id="Q9VIS1">
    <property type="glycosylation" value="1 site"/>
</dbReference>
<dbReference type="iPTMnet" id="Q9VIS1"/>
<dbReference type="PaxDb" id="7227-FBpp0304488"/>
<dbReference type="DNASU" id="35267"/>
<dbReference type="EnsemblMetazoa" id="FBtr0081318">
    <property type="protein sequence ID" value="FBpp0080851"/>
    <property type="gene ID" value="FBgn0032821"/>
</dbReference>
<dbReference type="EnsemblMetazoa" id="FBtr0332179">
    <property type="protein sequence ID" value="FBpp0304488"/>
    <property type="gene ID" value="FBgn0032821"/>
</dbReference>
<dbReference type="GeneID" id="35267"/>
<dbReference type="KEGG" id="dme:Dmel_CG10538"/>
<dbReference type="UCSC" id="CG10538-RA">
    <property type="organism name" value="d. melanogaster"/>
</dbReference>
<dbReference type="AGR" id="FB:FBgn0032821"/>
<dbReference type="CTD" id="35267"/>
<dbReference type="FlyBase" id="FBgn0032821">
    <property type="gene designation" value="CdGAPr"/>
</dbReference>
<dbReference type="VEuPathDB" id="VectorBase:FBgn0032821"/>
<dbReference type="eggNOG" id="KOG1449">
    <property type="taxonomic scope" value="Eukaryota"/>
</dbReference>
<dbReference type="GeneTree" id="ENSGT00940000168991"/>
<dbReference type="InParanoid" id="Q9VIS1"/>
<dbReference type="OMA" id="HALQKDM"/>
<dbReference type="OrthoDB" id="5873004at2759"/>
<dbReference type="PhylomeDB" id="Q9VIS1"/>
<dbReference type="Reactome" id="R-DME-8980692">
    <property type="pathway name" value="RHOA GTPase cycle"/>
</dbReference>
<dbReference type="Reactome" id="R-DME-9013026">
    <property type="pathway name" value="RHOB GTPase cycle"/>
</dbReference>
<dbReference type="Reactome" id="R-DME-9013148">
    <property type="pathway name" value="CDC42 GTPase cycle"/>
</dbReference>
<dbReference type="Reactome" id="R-DME-9013149">
    <property type="pathway name" value="RAC1 GTPase cycle"/>
</dbReference>
<dbReference type="Reactome" id="R-DME-9013404">
    <property type="pathway name" value="RAC2 GTPase cycle"/>
</dbReference>
<dbReference type="Reactome" id="R-DME-9013405">
    <property type="pathway name" value="RHOD GTPase cycle"/>
</dbReference>
<dbReference type="Reactome" id="R-DME-9013406">
    <property type="pathway name" value="RHOQ GTPase cycle"/>
</dbReference>
<dbReference type="Reactome" id="R-DME-9013408">
    <property type="pathway name" value="RHOG GTPase cycle"/>
</dbReference>
<dbReference type="Reactome" id="R-DME-9013409">
    <property type="pathway name" value="RHOJ GTPase cycle"/>
</dbReference>
<dbReference type="Reactome" id="R-DME-9013420">
    <property type="pathway name" value="RHOU GTPase cycle"/>
</dbReference>
<dbReference type="Reactome" id="R-DME-9013423">
    <property type="pathway name" value="RAC3 GTPase cycle"/>
</dbReference>
<dbReference type="Reactome" id="R-DME-9035034">
    <property type="pathway name" value="RHOF GTPase cycle"/>
</dbReference>
<dbReference type="SignaLink" id="Q9VIS1"/>
<dbReference type="BioGRID-ORCS" id="35267">
    <property type="hits" value="0 hits in 3 CRISPR screens"/>
</dbReference>
<dbReference type="GenomeRNAi" id="35267"/>
<dbReference type="PRO" id="PR:Q9VIS1"/>
<dbReference type="Proteomes" id="UP000000803">
    <property type="component" value="Chromosome 2L"/>
</dbReference>
<dbReference type="Bgee" id="FBgn0032821">
    <property type="expression patterns" value="Expressed in adult glial cell (Drosophila) in body wall and 169 other cell types or tissues"/>
</dbReference>
<dbReference type="ExpressionAtlas" id="Q9VIS1">
    <property type="expression patterns" value="baseline and differential"/>
</dbReference>
<dbReference type="GO" id="GO:0005096">
    <property type="term" value="F:GTPase activator activity"/>
    <property type="evidence" value="ECO:0000250"/>
    <property type="project" value="FlyBase"/>
</dbReference>
<dbReference type="GO" id="GO:0031290">
    <property type="term" value="P:retinal ganglion cell axon guidance"/>
    <property type="evidence" value="ECO:0000315"/>
    <property type="project" value="UniProtKB"/>
</dbReference>
<dbReference type="GO" id="GO:0007264">
    <property type="term" value="P:small GTPase-mediated signal transduction"/>
    <property type="evidence" value="ECO:0000318"/>
    <property type="project" value="GO_Central"/>
</dbReference>
<dbReference type="CDD" id="cd04384">
    <property type="entry name" value="RhoGAP_CdGAP"/>
    <property type="match status" value="1"/>
</dbReference>
<dbReference type="CDD" id="cd11835">
    <property type="entry name" value="SH3_ARHGAP32_33"/>
    <property type="match status" value="1"/>
</dbReference>
<dbReference type="FunFam" id="2.30.30.40:FF:000207">
    <property type="entry name" value="CLUMA_CG020965, isoform A"/>
    <property type="match status" value="1"/>
</dbReference>
<dbReference type="FunFam" id="1.10.555.10:FF:000002">
    <property type="entry name" value="rho GTPase-activating protein 32 isoform X1"/>
    <property type="match status" value="1"/>
</dbReference>
<dbReference type="Gene3D" id="1.10.555.10">
    <property type="entry name" value="Rho GTPase activation protein"/>
    <property type="match status" value="1"/>
</dbReference>
<dbReference type="Gene3D" id="2.30.30.40">
    <property type="entry name" value="SH3 Domains"/>
    <property type="match status" value="1"/>
</dbReference>
<dbReference type="InterPro" id="IPR051576">
    <property type="entry name" value="PX-Rho_GAP"/>
</dbReference>
<dbReference type="InterPro" id="IPR008936">
    <property type="entry name" value="Rho_GTPase_activation_prot"/>
</dbReference>
<dbReference type="InterPro" id="IPR000198">
    <property type="entry name" value="RhoGAP_dom"/>
</dbReference>
<dbReference type="InterPro" id="IPR036028">
    <property type="entry name" value="SH3-like_dom_sf"/>
</dbReference>
<dbReference type="InterPro" id="IPR001452">
    <property type="entry name" value="SH3_domain"/>
</dbReference>
<dbReference type="PANTHER" id="PTHR15729">
    <property type="entry name" value="CDC42 GTPASE-ACTIVATING PROTEIN"/>
    <property type="match status" value="1"/>
</dbReference>
<dbReference type="PANTHER" id="PTHR15729:SF10">
    <property type="entry name" value="GTPASE-ACTIVATING PROTEIN CDGAPR"/>
    <property type="match status" value="1"/>
</dbReference>
<dbReference type="Pfam" id="PF00620">
    <property type="entry name" value="RhoGAP"/>
    <property type="match status" value="1"/>
</dbReference>
<dbReference type="SMART" id="SM00324">
    <property type="entry name" value="RhoGAP"/>
    <property type="match status" value="1"/>
</dbReference>
<dbReference type="SMART" id="SM00326">
    <property type="entry name" value="SH3"/>
    <property type="match status" value="1"/>
</dbReference>
<dbReference type="SUPFAM" id="SSF48350">
    <property type="entry name" value="GTPase activation domain, GAP"/>
    <property type="match status" value="1"/>
</dbReference>
<dbReference type="SUPFAM" id="SSF50044">
    <property type="entry name" value="SH3-domain"/>
    <property type="match status" value="1"/>
</dbReference>
<dbReference type="PROSITE" id="PS50238">
    <property type="entry name" value="RHOGAP"/>
    <property type="match status" value="1"/>
</dbReference>
<dbReference type="PROSITE" id="PS50002">
    <property type="entry name" value="SH3"/>
    <property type="match status" value="1"/>
</dbReference>
<protein>
    <recommendedName>
        <fullName>GTPase-activating protein CdGAPr</fullName>
    </recommendedName>
    <alternativeName>
        <fullName>d-CdGAPr</fullName>
    </alternativeName>
</protein>
<evidence type="ECO:0000255" key="1"/>
<evidence type="ECO:0000255" key="2">
    <source>
        <dbReference type="PROSITE-ProRule" id="PRU00172"/>
    </source>
</evidence>
<evidence type="ECO:0000255" key="3">
    <source>
        <dbReference type="PROSITE-ProRule" id="PRU00192"/>
    </source>
</evidence>
<evidence type="ECO:0000256" key="4">
    <source>
        <dbReference type="SAM" id="MobiDB-lite"/>
    </source>
</evidence>
<evidence type="ECO:0000269" key="5">
    <source>
    </source>
</evidence>
<evidence type="ECO:0000269" key="6">
    <source>
    </source>
</evidence>
<evidence type="ECO:0000269" key="7">
    <source>
    </source>
</evidence>
<evidence type="ECO:0000269" key="8">
    <source>
    </source>
</evidence>
<evidence type="ECO:0000305" key="9"/>
<comment type="function">
    <text evidence="6">Probably functions as a GTPase-activating protein (GAP) for RAC1 and/or CDC42. Required for optic stalk formation.</text>
</comment>
<comment type="tissue specificity">
    <text evidence="5">Ubiquitously expressed.</text>
</comment>
<comment type="developmental stage">
    <text evidence="5">Expressed at all developmental stages, with highest expression at the posterior pole of the early cellular blastoderm, the neuro-ectoderm prior to neuroblast delamination, rows of epidermal cells in the most posterior part of thoracic and first abdominal segments and a ring of epidermal cells at the posterior end of the embryo.</text>
</comment>
<comment type="sequence caution" evidence="9">
    <conflict type="erroneous initiation">
        <sequence resource="EMBL-CDS" id="AAM49910"/>
    </conflict>
</comment>
<comment type="sequence caution" evidence="9">
    <conflict type="frameshift">
        <sequence resource="EMBL-CDS" id="AAT94493"/>
    </conflict>
</comment>
<name>CDGAP_DROME</name>
<gene>
    <name type="primary">CdGAPr</name>
    <name type="ORF">CG10538</name>
</gene>
<keyword id="KW-0175">Coiled coil</keyword>
<keyword id="KW-0217">Developmental protein</keyword>
<keyword id="KW-0343">GTPase activation</keyword>
<keyword id="KW-0597">Phosphoprotein</keyword>
<keyword id="KW-1185">Reference proteome</keyword>
<keyword id="KW-0728">SH3 domain</keyword>
<feature type="chain" id="PRO_0000320117" description="GTPase-activating protein CdGAPr">
    <location>
        <begin position="1"/>
        <end position="1843"/>
    </location>
</feature>
<feature type="domain" description="SH3" evidence="3">
    <location>
        <begin position="295"/>
        <end position="363"/>
    </location>
</feature>
<feature type="domain" description="Rho-GAP" evidence="2">
    <location>
        <begin position="424"/>
        <end position="618"/>
    </location>
</feature>
<feature type="region of interest" description="Disordered" evidence="4">
    <location>
        <begin position="94"/>
        <end position="117"/>
    </location>
</feature>
<feature type="region of interest" description="Disordered" evidence="4">
    <location>
        <begin position="746"/>
        <end position="780"/>
    </location>
</feature>
<feature type="region of interest" description="Disordered" evidence="4">
    <location>
        <begin position="894"/>
        <end position="975"/>
    </location>
</feature>
<feature type="region of interest" description="Disordered" evidence="4">
    <location>
        <begin position="1013"/>
        <end position="1106"/>
    </location>
</feature>
<feature type="region of interest" description="Disordered" evidence="4">
    <location>
        <begin position="1721"/>
        <end position="1745"/>
    </location>
</feature>
<feature type="region of interest" description="Disordered" evidence="4">
    <location>
        <begin position="1779"/>
        <end position="1829"/>
    </location>
</feature>
<feature type="coiled-coil region" evidence="1">
    <location>
        <begin position="1378"/>
        <end position="1404"/>
    </location>
</feature>
<feature type="compositionally biased region" description="Polar residues" evidence="4">
    <location>
        <begin position="759"/>
        <end position="771"/>
    </location>
</feature>
<feature type="compositionally biased region" description="Polar residues" evidence="4">
    <location>
        <begin position="928"/>
        <end position="939"/>
    </location>
</feature>
<feature type="compositionally biased region" description="Low complexity" evidence="4">
    <location>
        <begin position="1029"/>
        <end position="1053"/>
    </location>
</feature>
<feature type="compositionally biased region" description="Basic and acidic residues" evidence="4">
    <location>
        <begin position="1058"/>
        <end position="1069"/>
    </location>
</feature>
<feature type="compositionally biased region" description="Polar residues" evidence="4">
    <location>
        <begin position="1071"/>
        <end position="1097"/>
    </location>
</feature>
<feature type="compositionally biased region" description="Polar residues" evidence="4">
    <location>
        <begin position="1779"/>
        <end position="1790"/>
    </location>
</feature>
<feature type="compositionally biased region" description="Basic and acidic residues" evidence="4">
    <location>
        <begin position="1793"/>
        <end position="1806"/>
    </location>
</feature>
<feature type="compositionally biased region" description="Polar residues" evidence="4">
    <location>
        <begin position="1807"/>
        <end position="1818"/>
    </location>
</feature>
<feature type="site" description="Arginine finger; crucial for GTP hydrolysis by stabilizing the transition state" evidence="2">
    <location>
        <position position="459"/>
    </location>
</feature>
<feature type="modified residue" description="Phosphoserine" evidence="8">
    <location>
        <position position="166"/>
    </location>
</feature>
<feature type="modified residue" description="Phosphoserine" evidence="8">
    <location>
        <position position="168"/>
    </location>
</feature>
<feature type="modified residue" description="Phosphoserine" evidence="8">
    <location>
        <position position="180"/>
    </location>
</feature>
<feature type="modified residue" description="Phosphoserine" evidence="8">
    <location>
        <position position="837"/>
    </location>
</feature>
<feature type="modified residue" description="Phosphoserine" evidence="8">
    <location>
        <position position="840"/>
    </location>
</feature>
<feature type="modified residue" description="Phosphothreonine" evidence="8">
    <location>
        <position position="843"/>
    </location>
</feature>
<feature type="modified residue" description="Phosphoserine" evidence="8">
    <location>
        <position position="851"/>
    </location>
</feature>
<feature type="modified residue" description="Phosphoserine" evidence="8">
    <location>
        <position position="861"/>
    </location>
</feature>
<feature type="modified residue" description="Phosphoserine" evidence="8">
    <location>
        <position position="872"/>
    </location>
</feature>
<feature type="modified residue" description="Phosphoserine" evidence="8">
    <location>
        <position position="876"/>
    </location>
</feature>
<feature type="modified residue" description="Phosphoserine" evidence="8">
    <location>
        <position position="1029"/>
    </location>
</feature>
<feature type="modified residue" description="Phosphothreonine" evidence="8">
    <location>
        <position position="1118"/>
    </location>
</feature>
<feature type="modified residue" description="Phosphothreonine" evidence="8">
    <location>
        <position position="1121"/>
    </location>
</feature>
<feature type="modified residue" description="Phosphoserine" evidence="8">
    <location>
        <position position="1125"/>
    </location>
</feature>
<feature type="modified residue" description="Phosphoserine" evidence="7">
    <location>
        <position position="1216"/>
    </location>
</feature>
<feature type="modified residue" description="Phosphoserine" evidence="8">
    <location>
        <position position="1281"/>
    </location>
</feature>
<feature type="modified residue" description="Phosphoserine" evidence="8">
    <location>
        <position position="1284"/>
    </location>
</feature>
<feature type="modified residue" description="Phosphoserine" evidence="8">
    <location>
        <position position="1453"/>
    </location>
</feature>
<feature type="modified residue" description="Phosphoserine" evidence="8">
    <location>
        <position position="1456"/>
    </location>
</feature>
<feature type="modified residue" description="Phosphothreonine" evidence="8">
    <location>
        <position position="1679"/>
    </location>
</feature>
<feature type="sequence conflict" description="In Ref. 4; AAT94493 and 5; AAM49910." evidence="9" ref="4 5">
    <location>
        <position position="1092"/>
    </location>
</feature>
<feature type="sequence conflict" description="In Ref. 5; AAM49910." evidence="9" ref="5">
    <original>NNR</original>
    <variation>K</variation>
    <location>
        <begin position="1818"/>
        <end position="1820"/>
    </location>
</feature>
<proteinExistence type="evidence at protein level"/>
<sequence length="1843" mass="204217">MSDKVSTSLAAQLHSHALASAEAGGIGGVNGGPIACHASTDKDAQAPPLQFEMDAPAAAISAQLNFKIVPADSLPGLSYQDMFASMNTSQISNASTESSCSPPIQGAVPPPKPSRHMAVQPLNSKSCRFPKLEECAHFHYERVQLGPLSVQLLDDKSEHMGSSIASQSLGGDLPHSSLRSFSPESCWFIIRVCPQRCEPFLIKRSFENMQLLDEMLHRCVYDRKISGLRNMEELAAELPSESDVEYAVAKYLERFSKIASDSLTCGTILTWLQLDNKGRRLPLADGETQRTINTPAVGAAYGVRRYQAQAPDEINIEVGDMISVIDMPSPAESIWWRGKKSHLQKSLYEVGFFPQSCVATIGDKVPRNFPMPAPLVGHLDASPTKPVLRKHGKLIAFFRSFILSRPSRRRLKQSGIYRERVFNCDLSEHLLNSGQDIPMVLRSCAEFIENYGVIDGIYRLSGITSNIQRLRRAFDEERVPDLGNPEMKQDIHAVSSLLKMYFRELPNPLCTYQLYDNFVEAIQVKADEADERLRLMKETVLKLPPPHYRTLKYLAEHLYKVSQHHGRTGMTDKNLAIVWAPNLLRSPALESGGVAALRGVGVQAVVTEYLIRNCHNIFDALDDHPARHSMVASATAAAANAAGGELRLESLTDCESLLVEQREQDQSLGVVERPKSLSTGGAKLISLEEAQERHSRVEGADLKQSLPISMLTSASSNAASNIGSYIEVGGGPSSLPDKYHTVLSAPRSWQKRKPDKTPSWKSIFSRSQRQGNPDPGQKITTDVKDSVASRVSFVQASHAHASKELTKHDKPKSIELLETTSNERDPKPMDLCIRSNSIDSLRTVGHSRSVSHDSYFDLLQSPQRGHMTTCPSRELSELGLNFDREEPEMRIFSESESLVSSPRVGKENVPPASGSATRRIMRARPEDFSSQTNSVNPSPKKQPRLNLLSPSSARTMPPPPLSAPGTASSSCGHESGGAENCCKRYKLEDQLCDIQFIDCGTPENVPTTQQQFASVEVHPPPKPARANQSPISSSNGASVGSSSSSTRYSYPSVQLGAKRKEQQDAKERFSYQGTFTQPGQKQESSAPRPVHSTNNGATLRKPRVEPVEDGQIKLHVPTPTTPARSPRYSLLLCDTESSDNSSAVNTPQYDMEPLMLTSAMSGVSGVSSNVQQQQLLLGVDASSSYLGSSHESLGQNINNHHDAEQRDMNALKRELSLDLNPLQPRLPQPANRAATLPVKDQLQAAAAAMCSSPNNSNFTDNTSQSVTPSEYGYQHLQRQLSMHSLLATDESSPVYEDFEQTPVKMVPSPIKSTISITYKSPEKEKKPSAILETNFDENTVYEQVKLFRNSVTEVNQMLHERSSLKQIAEEEQHDGGAYKAAEMTQQLLQLEQEHHDHEEQQEKEPEDEEQSQLLYENIELRKPKTVYENLRGEEMKFITEEQKPNVDRIELDSLDSLPDNMEHEQSSPSKSPTFSVKELANKFESSPVEQLPNFDFSVRGGSMKKPNELSVPKTMPAPVPLKKLNSSAQKITRSLDENAFVREFGGKQLQDLSLSNKLPEVMSEVNSRRKSFDFTRPKTLNPPKRLPGMSITEEICQKRVGEMEAITPTTENRISLIQQNNMPKEQQSSANQFLPPAGRKNVLTGVVLDRERIDKIKEERRQQLTQKYYGDTLKSRSRTELNSEDNFPAAESLRIKSKSRGDMHALQKDIDMNLKQLSRVTGGGSECTLHTGLSQGNGQEHLGQQRVRRISDEKNQNCDTSNGGVSGITSTSLLSVKTTAQKYGSTSKTPANKFERSQPMPRDRLQRNSLAESNAGTNNREKISPQFSIRDVTAMFESRSQNQ</sequence>